<gene>
    <name type="ordered locus">BH2668</name>
</gene>
<name>DAPEL_HALH5</name>
<sequence>MEPSLIDVRRALHRIPELGFEEYKTQTYLLDLIQSLPQDFLEVKTWKTGILVRVGGRKGEKTVAYRADMDGLPITEETGLPFVSQHEGRMHACGHDLHMTIAFGLLRHFAYHQPETHLLFIFQPAEEGPGGAKPMLDSEEFRMWWPDEIIALHIAPEYPVGTIATRKGLLFANTSELFIDLKGQGGHAAYPHLANDMVVAASHLVTQLQSVVSRNVDPLDSAVVTIGVIKGGTKQNIIAETARIEGTIRTLSIESMKKVKKRIEALVSGIEIGFSCQASIDYGSNYCQVWNDEERVARFIEYSQGREGVTFIECSEAMTGEDFGYFLEEIPGFMFWLGVDTNYGLHDARLNPNEDVLSFAVQHLIGYIETL</sequence>
<dbReference type="EC" id="3.5.1.47" evidence="1"/>
<dbReference type="EMBL" id="BA000004">
    <property type="protein sequence ID" value="BAB06387.1"/>
    <property type="molecule type" value="Genomic_DNA"/>
</dbReference>
<dbReference type="PIR" id="D83983">
    <property type="entry name" value="D83983"/>
</dbReference>
<dbReference type="RefSeq" id="WP_010898817.1">
    <property type="nucleotide sequence ID" value="NC_002570.2"/>
</dbReference>
<dbReference type="SMR" id="Q9K9H9"/>
<dbReference type="STRING" id="272558.gene:10728566"/>
<dbReference type="MEROPS" id="M20.A27"/>
<dbReference type="KEGG" id="bha:BH2668"/>
<dbReference type="eggNOG" id="COG1473">
    <property type="taxonomic scope" value="Bacteria"/>
</dbReference>
<dbReference type="HOGENOM" id="CLU_023257_0_1_9"/>
<dbReference type="OrthoDB" id="9776731at2"/>
<dbReference type="UniPathway" id="UPA00034">
    <property type="reaction ID" value="UER00024"/>
</dbReference>
<dbReference type="Proteomes" id="UP000001258">
    <property type="component" value="Chromosome"/>
</dbReference>
<dbReference type="GO" id="GO:0050118">
    <property type="term" value="F:N-acetyldiaminopimelate deacetylase activity"/>
    <property type="evidence" value="ECO:0007669"/>
    <property type="project" value="UniProtKB-UniRule"/>
</dbReference>
<dbReference type="GO" id="GO:0019877">
    <property type="term" value="P:diaminopimelate biosynthetic process"/>
    <property type="evidence" value="ECO:0007669"/>
    <property type="project" value="UniProtKB-UniRule"/>
</dbReference>
<dbReference type="GO" id="GO:0009089">
    <property type="term" value="P:lysine biosynthetic process via diaminopimelate"/>
    <property type="evidence" value="ECO:0007669"/>
    <property type="project" value="UniProtKB-UniRule"/>
</dbReference>
<dbReference type="CDD" id="cd05670">
    <property type="entry name" value="M20_Acy1_YkuR-like"/>
    <property type="match status" value="1"/>
</dbReference>
<dbReference type="FunFam" id="3.30.70.360:FF:000001">
    <property type="entry name" value="N-acetyldiaminopimelate deacetylase"/>
    <property type="match status" value="1"/>
</dbReference>
<dbReference type="Gene3D" id="3.30.70.360">
    <property type="match status" value="1"/>
</dbReference>
<dbReference type="Gene3D" id="3.40.630.10">
    <property type="entry name" value="Zn peptidases"/>
    <property type="match status" value="1"/>
</dbReference>
<dbReference type="HAMAP" id="MF_01692">
    <property type="entry name" value="DapEL"/>
    <property type="match status" value="1"/>
</dbReference>
<dbReference type="InterPro" id="IPR023905">
    <property type="entry name" value="AcetylDAP_deacetylase"/>
</dbReference>
<dbReference type="InterPro" id="IPR017439">
    <property type="entry name" value="Amidohydrolase"/>
</dbReference>
<dbReference type="InterPro" id="IPR036264">
    <property type="entry name" value="Bact_exopeptidase_dim_dom"/>
</dbReference>
<dbReference type="InterPro" id="IPR002933">
    <property type="entry name" value="Peptidase_M20"/>
</dbReference>
<dbReference type="InterPro" id="IPR011650">
    <property type="entry name" value="Peptidase_M20_dimer"/>
</dbReference>
<dbReference type="NCBIfam" id="TIGR01891">
    <property type="entry name" value="amidohydrolases"/>
    <property type="match status" value="1"/>
</dbReference>
<dbReference type="PANTHER" id="PTHR11014:SF98">
    <property type="entry name" value="N-ACETYLDIAMINOPIMELATE DEACETYLASE"/>
    <property type="match status" value="1"/>
</dbReference>
<dbReference type="PANTHER" id="PTHR11014">
    <property type="entry name" value="PEPTIDASE M20 FAMILY MEMBER"/>
    <property type="match status" value="1"/>
</dbReference>
<dbReference type="Pfam" id="PF07687">
    <property type="entry name" value="M20_dimer"/>
    <property type="match status" value="1"/>
</dbReference>
<dbReference type="Pfam" id="PF01546">
    <property type="entry name" value="Peptidase_M20"/>
    <property type="match status" value="1"/>
</dbReference>
<dbReference type="PIRSF" id="PIRSF005962">
    <property type="entry name" value="Pept_M20D_amidohydro"/>
    <property type="match status" value="1"/>
</dbReference>
<dbReference type="SUPFAM" id="SSF55031">
    <property type="entry name" value="Bacterial exopeptidase dimerisation domain"/>
    <property type="match status" value="1"/>
</dbReference>
<dbReference type="SUPFAM" id="SSF53187">
    <property type="entry name" value="Zn-dependent exopeptidases"/>
    <property type="match status" value="1"/>
</dbReference>
<keyword id="KW-0028">Amino-acid biosynthesis</keyword>
<keyword id="KW-0220">Diaminopimelate biosynthesis</keyword>
<keyword id="KW-0378">Hydrolase</keyword>
<keyword id="KW-0457">Lysine biosynthesis</keyword>
<keyword id="KW-1185">Reference proteome</keyword>
<proteinExistence type="inferred from homology"/>
<feature type="chain" id="PRO_0000376747" description="N-acetyldiaminopimelate deacetylase">
    <location>
        <begin position="1"/>
        <end position="371"/>
    </location>
</feature>
<feature type="active site" evidence="1">
    <location>
        <position position="68"/>
    </location>
</feature>
<feature type="active site" description="Proton acceptor" evidence="1">
    <location>
        <position position="127"/>
    </location>
</feature>
<protein>
    <recommendedName>
        <fullName evidence="1">N-acetyldiaminopimelate deacetylase</fullName>
        <ecNumber evidence="1">3.5.1.47</ecNumber>
    </recommendedName>
</protein>
<reference key="1">
    <citation type="journal article" date="2000" name="Nucleic Acids Res.">
        <title>Complete genome sequence of the alkaliphilic bacterium Bacillus halodurans and genomic sequence comparison with Bacillus subtilis.</title>
        <authorList>
            <person name="Takami H."/>
            <person name="Nakasone K."/>
            <person name="Takaki Y."/>
            <person name="Maeno G."/>
            <person name="Sasaki R."/>
            <person name="Masui N."/>
            <person name="Fuji F."/>
            <person name="Hirama C."/>
            <person name="Nakamura Y."/>
            <person name="Ogasawara N."/>
            <person name="Kuhara S."/>
            <person name="Horikoshi K."/>
        </authorList>
    </citation>
    <scope>NUCLEOTIDE SEQUENCE [LARGE SCALE GENOMIC DNA]</scope>
    <source>
        <strain>ATCC BAA-125 / DSM 18197 / FERM 7344 / JCM 9153 / C-125</strain>
    </source>
</reference>
<organism>
    <name type="scientific">Halalkalibacterium halodurans (strain ATCC BAA-125 / DSM 18197 / FERM 7344 / JCM 9153 / C-125)</name>
    <name type="common">Bacillus halodurans</name>
    <dbReference type="NCBI Taxonomy" id="272558"/>
    <lineage>
        <taxon>Bacteria</taxon>
        <taxon>Bacillati</taxon>
        <taxon>Bacillota</taxon>
        <taxon>Bacilli</taxon>
        <taxon>Bacillales</taxon>
        <taxon>Bacillaceae</taxon>
        <taxon>Halalkalibacterium (ex Joshi et al. 2022)</taxon>
    </lineage>
</organism>
<comment type="function">
    <text evidence="1">Catalyzes the conversion of N-acetyl-diaminopimelate to diaminopimelate and acetate.</text>
</comment>
<comment type="catalytic activity">
    <reaction evidence="1">
        <text>N-acetyl-(2S,6S)-2,6-diaminopimelate + H2O = (2S,6S)-2,6-diaminopimelate + acetate</text>
        <dbReference type="Rhea" id="RHEA:20405"/>
        <dbReference type="ChEBI" id="CHEBI:15377"/>
        <dbReference type="ChEBI" id="CHEBI:30089"/>
        <dbReference type="ChEBI" id="CHEBI:57609"/>
        <dbReference type="ChEBI" id="CHEBI:58767"/>
        <dbReference type="EC" id="3.5.1.47"/>
    </reaction>
</comment>
<comment type="pathway">
    <text evidence="1">Amino-acid biosynthesis; L-lysine biosynthesis via DAP pathway; LL-2,6-diaminopimelate from (S)-tetrahydrodipicolinate (acetylase route): step 3/3.</text>
</comment>
<comment type="similarity">
    <text evidence="1">Belongs to the peptidase M20A family. N-acetyldiaminopimelate deacetylase subfamily.</text>
</comment>
<evidence type="ECO:0000255" key="1">
    <source>
        <dbReference type="HAMAP-Rule" id="MF_01692"/>
    </source>
</evidence>
<accession>Q9K9H9</accession>